<proteinExistence type="inferred from homology"/>
<comment type="function">
    <text evidence="1">Binds 23S rRNA and is also seen to make contacts with the A and possibly P site tRNAs.</text>
</comment>
<comment type="subunit">
    <text evidence="1">Part of the 50S ribosomal subunit.</text>
</comment>
<comment type="similarity">
    <text evidence="1">Belongs to the universal ribosomal protein uL16 family.</text>
</comment>
<protein>
    <recommendedName>
        <fullName evidence="1">Large ribosomal subunit protein uL16</fullName>
    </recommendedName>
    <alternativeName>
        <fullName evidence="2">50S ribosomal protein L16</fullName>
    </alternativeName>
</protein>
<keyword id="KW-1185">Reference proteome</keyword>
<keyword id="KW-0687">Ribonucleoprotein</keyword>
<keyword id="KW-0689">Ribosomal protein</keyword>
<keyword id="KW-0694">RNA-binding</keyword>
<keyword id="KW-0699">rRNA-binding</keyword>
<keyword id="KW-0820">tRNA-binding</keyword>
<dbReference type="EMBL" id="CP001196">
    <property type="protein sequence ID" value="ACI92812.1"/>
    <property type="molecule type" value="Genomic_DNA"/>
</dbReference>
<dbReference type="EMBL" id="CP002826">
    <property type="protein sequence ID" value="AEI07023.1"/>
    <property type="molecule type" value="Genomic_DNA"/>
</dbReference>
<dbReference type="RefSeq" id="WP_012562841.1">
    <property type="nucleotide sequence ID" value="NC_015684.1"/>
</dbReference>
<dbReference type="SMR" id="B6JEU0"/>
<dbReference type="STRING" id="504832.OCA5_c23230"/>
<dbReference type="KEGG" id="oca:OCAR_5684"/>
<dbReference type="KEGG" id="ocg:OCA5_c23230"/>
<dbReference type="PATRIC" id="fig|504832.7.peg.2448"/>
<dbReference type="eggNOG" id="COG0197">
    <property type="taxonomic scope" value="Bacteria"/>
</dbReference>
<dbReference type="HOGENOM" id="CLU_078858_2_1_5"/>
<dbReference type="OrthoDB" id="9802589at2"/>
<dbReference type="Proteomes" id="UP000007730">
    <property type="component" value="Chromosome"/>
</dbReference>
<dbReference type="GO" id="GO:0022625">
    <property type="term" value="C:cytosolic large ribosomal subunit"/>
    <property type="evidence" value="ECO:0007669"/>
    <property type="project" value="TreeGrafter"/>
</dbReference>
<dbReference type="GO" id="GO:0019843">
    <property type="term" value="F:rRNA binding"/>
    <property type="evidence" value="ECO:0007669"/>
    <property type="project" value="UniProtKB-UniRule"/>
</dbReference>
<dbReference type="GO" id="GO:0003735">
    <property type="term" value="F:structural constituent of ribosome"/>
    <property type="evidence" value="ECO:0007669"/>
    <property type="project" value="InterPro"/>
</dbReference>
<dbReference type="GO" id="GO:0000049">
    <property type="term" value="F:tRNA binding"/>
    <property type="evidence" value="ECO:0007669"/>
    <property type="project" value="UniProtKB-KW"/>
</dbReference>
<dbReference type="GO" id="GO:0006412">
    <property type="term" value="P:translation"/>
    <property type="evidence" value="ECO:0007669"/>
    <property type="project" value="UniProtKB-UniRule"/>
</dbReference>
<dbReference type="CDD" id="cd01433">
    <property type="entry name" value="Ribosomal_L16_L10e"/>
    <property type="match status" value="1"/>
</dbReference>
<dbReference type="FunFam" id="3.90.1170.10:FF:000001">
    <property type="entry name" value="50S ribosomal protein L16"/>
    <property type="match status" value="1"/>
</dbReference>
<dbReference type="Gene3D" id="3.90.1170.10">
    <property type="entry name" value="Ribosomal protein L10e/L16"/>
    <property type="match status" value="1"/>
</dbReference>
<dbReference type="HAMAP" id="MF_01342">
    <property type="entry name" value="Ribosomal_uL16"/>
    <property type="match status" value="1"/>
</dbReference>
<dbReference type="InterPro" id="IPR047873">
    <property type="entry name" value="Ribosomal_uL16"/>
</dbReference>
<dbReference type="InterPro" id="IPR000114">
    <property type="entry name" value="Ribosomal_uL16_bact-type"/>
</dbReference>
<dbReference type="InterPro" id="IPR020798">
    <property type="entry name" value="Ribosomal_uL16_CS"/>
</dbReference>
<dbReference type="InterPro" id="IPR016180">
    <property type="entry name" value="Ribosomal_uL16_dom"/>
</dbReference>
<dbReference type="InterPro" id="IPR036920">
    <property type="entry name" value="Ribosomal_uL16_sf"/>
</dbReference>
<dbReference type="NCBIfam" id="TIGR01164">
    <property type="entry name" value="rplP_bact"/>
    <property type="match status" value="1"/>
</dbReference>
<dbReference type="PANTHER" id="PTHR12220">
    <property type="entry name" value="50S/60S RIBOSOMAL PROTEIN L16"/>
    <property type="match status" value="1"/>
</dbReference>
<dbReference type="PANTHER" id="PTHR12220:SF13">
    <property type="entry name" value="LARGE RIBOSOMAL SUBUNIT PROTEIN UL16M"/>
    <property type="match status" value="1"/>
</dbReference>
<dbReference type="Pfam" id="PF00252">
    <property type="entry name" value="Ribosomal_L16"/>
    <property type="match status" value="1"/>
</dbReference>
<dbReference type="PRINTS" id="PR00060">
    <property type="entry name" value="RIBOSOMALL16"/>
</dbReference>
<dbReference type="SUPFAM" id="SSF54686">
    <property type="entry name" value="Ribosomal protein L16p/L10e"/>
    <property type="match status" value="1"/>
</dbReference>
<dbReference type="PROSITE" id="PS00586">
    <property type="entry name" value="RIBOSOMAL_L16_1"/>
    <property type="match status" value="1"/>
</dbReference>
<dbReference type="PROSITE" id="PS00701">
    <property type="entry name" value="RIBOSOMAL_L16_2"/>
    <property type="match status" value="1"/>
</dbReference>
<organism>
    <name type="scientific">Afipia carboxidovorans (strain ATCC 49405 / DSM 1227 / KCTC 32145 / OM5)</name>
    <name type="common">Oligotropha carboxidovorans</name>
    <dbReference type="NCBI Taxonomy" id="504832"/>
    <lineage>
        <taxon>Bacteria</taxon>
        <taxon>Pseudomonadati</taxon>
        <taxon>Pseudomonadota</taxon>
        <taxon>Alphaproteobacteria</taxon>
        <taxon>Hyphomicrobiales</taxon>
        <taxon>Nitrobacteraceae</taxon>
        <taxon>Afipia</taxon>
    </lineage>
</organism>
<gene>
    <name evidence="1" type="primary">rplP</name>
    <name type="ordered locus">OCAR_5684</name>
    <name type="ordered locus">OCA5_c23230</name>
</gene>
<reference key="1">
    <citation type="journal article" date="2008" name="J. Bacteriol.">
        <title>Genome sequence of the chemolithoautotrophic bacterium Oligotropha carboxidovorans OM5T.</title>
        <authorList>
            <person name="Paul D."/>
            <person name="Bridges S."/>
            <person name="Burgess S.C."/>
            <person name="Dandass Y."/>
            <person name="Lawrence M.L."/>
        </authorList>
    </citation>
    <scope>NUCLEOTIDE SEQUENCE [LARGE SCALE GENOMIC DNA]</scope>
    <source>
        <strain>ATCC 49405 / DSM 1227 / KCTC 32145 / OM5</strain>
    </source>
</reference>
<reference key="2">
    <citation type="journal article" date="2011" name="J. Bacteriol.">
        <title>Complete genome sequences of the chemolithoautotrophic Oligotropha carboxidovorans strains OM4 and OM5.</title>
        <authorList>
            <person name="Volland S."/>
            <person name="Rachinger M."/>
            <person name="Strittmatter A."/>
            <person name="Daniel R."/>
            <person name="Gottschalk G."/>
            <person name="Meyer O."/>
        </authorList>
    </citation>
    <scope>NUCLEOTIDE SEQUENCE [LARGE SCALE GENOMIC DNA]</scope>
    <source>
        <strain>ATCC 49405 / DSM 1227 / KCTC 32145 / OM5</strain>
    </source>
</reference>
<accession>B6JEU0</accession>
<accession>F8BZC0</accession>
<evidence type="ECO:0000255" key="1">
    <source>
        <dbReference type="HAMAP-Rule" id="MF_01342"/>
    </source>
</evidence>
<evidence type="ECO:0000305" key="2"/>
<name>RL16_AFIC5</name>
<feature type="chain" id="PRO_1000143003" description="Large ribosomal subunit protein uL16">
    <location>
        <begin position="1"/>
        <end position="137"/>
    </location>
</feature>
<sequence>MMQPKKTKFRKAHKGRIHGVASSGATLSFGQFGLKAMAPERITARQIEAARRALTRHMKRVGRVWIRVFPDVPVSKKPAEVRMGSGKGSPELWVVRVKPGRILFEIDGVNDQIAREALTLAAAKLPIKTRFVARIAE</sequence>